<gene>
    <name evidence="1" type="primary">aroQ</name>
    <name type="ordered locus">BAMEG_4457</name>
</gene>
<feature type="chain" id="PRO_1000123680" description="3-dehydroquinate dehydratase">
    <location>
        <begin position="1"/>
        <end position="146"/>
    </location>
</feature>
<feature type="active site" description="Proton acceptor" evidence="1">
    <location>
        <position position="23"/>
    </location>
</feature>
<feature type="active site" description="Proton donor" evidence="1">
    <location>
        <position position="100"/>
    </location>
</feature>
<feature type="binding site" evidence="1">
    <location>
        <position position="74"/>
    </location>
    <ligand>
        <name>substrate</name>
    </ligand>
</feature>
<feature type="binding site" evidence="1">
    <location>
        <position position="80"/>
    </location>
    <ligand>
        <name>substrate</name>
    </ligand>
</feature>
<feature type="binding site" evidence="1">
    <location>
        <position position="87"/>
    </location>
    <ligand>
        <name>substrate</name>
    </ligand>
</feature>
<feature type="binding site" evidence="1">
    <location>
        <begin position="101"/>
        <end position="102"/>
    </location>
    <ligand>
        <name>substrate</name>
    </ligand>
</feature>
<feature type="binding site" evidence="1">
    <location>
        <position position="111"/>
    </location>
    <ligand>
        <name>substrate</name>
    </ligand>
</feature>
<feature type="site" description="Transition state stabilizer" evidence="1">
    <location>
        <position position="18"/>
    </location>
</feature>
<reference key="1">
    <citation type="submission" date="2008-10" db="EMBL/GenBank/DDBJ databases">
        <title>Genome sequence of Bacillus anthracis str. CDC 684.</title>
        <authorList>
            <person name="Dodson R.J."/>
            <person name="Munk A.C."/>
            <person name="Brettin T."/>
            <person name="Bruce D."/>
            <person name="Detter C."/>
            <person name="Tapia R."/>
            <person name="Han C."/>
            <person name="Sutton G."/>
            <person name="Sims D."/>
        </authorList>
    </citation>
    <scope>NUCLEOTIDE SEQUENCE [LARGE SCALE GENOMIC DNA]</scope>
    <source>
        <strain>CDC 684 / NRRL 3495</strain>
    </source>
</reference>
<name>AROQ_BACAC</name>
<protein>
    <recommendedName>
        <fullName evidence="1">3-dehydroquinate dehydratase</fullName>
        <shortName evidence="1">3-dehydroquinase</shortName>
        <ecNumber evidence="1">4.2.1.10</ecNumber>
    </recommendedName>
    <alternativeName>
        <fullName evidence="1">Type II DHQase</fullName>
    </alternativeName>
</protein>
<accession>C3LKM7</accession>
<dbReference type="EC" id="4.2.1.10" evidence="1"/>
<dbReference type="EMBL" id="CP001215">
    <property type="protein sequence ID" value="ACP13267.1"/>
    <property type="molecule type" value="Genomic_DNA"/>
</dbReference>
<dbReference type="RefSeq" id="WP_000757082.1">
    <property type="nucleotide sequence ID" value="NC_012581.1"/>
</dbReference>
<dbReference type="SMR" id="C3LKM7"/>
<dbReference type="GeneID" id="45024083"/>
<dbReference type="KEGG" id="bah:BAMEG_4457"/>
<dbReference type="HOGENOM" id="CLU_090968_3_0_9"/>
<dbReference type="UniPathway" id="UPA00053">
    <property type="reaction ID" value="UER00086"/>
</dbReference>
<dbReference type="GO" id="GO:0003855">
    <property type="term" value="F:3-dehydroquinate dehydratase activity"/>
    <property type="evidence" value="ECO:0007669"/>
    <property type="project" value="UniProtKB-UniRule"/>
</dbReference>
<dbReference type="GO" id="GO:0008652">
    <property type="term" value="P:amino acid biosynthetic process"/>
    <property type="evidence" value="ECO:0007669"/>
    <property type="project" value="UniProtKB-KW"/>
</dbReference>
<dbReference type="GO" id="GO:0009073">
    <property type="term" value="P:aromatic amino acid family biosynthetic process"/>
    <property type="evidence" value="ECO:0007669"/>
    <property type="project" value="UniProtKB-KW"/>
</dbReference>
<dbReference type="GO" id="GO:0009423">
    <property type="term" value="P:chorismate biosynthetic process"/>
    <property type="evidence" value="ECO:0007669"/>
    <property type="project" value="UniProtKB-UniRule"/>
</dbReference>
<dbReference type="GO" id="GO:0019631">
    <property type="term" value="P:quinate catabolic process"/>
    <property type="evidence" value="ECO:0007669"/>
    <property type="project" value="TreeGrafter"/>
</dbReference>
<dbReference type="CDD" id="cd00466">
    <property type="entry name" value="DHQase_II"/>
    <property type="match status" value="1"/>
</dbReference>
<dbReference type="Gene3D" id="3.40.50.9100">
    <property type="entry name" value="Dehydroquinase, class II"/>
    <property type="match status" value="1"/>
</dbReference>
<dbReference type="HAMAP" id="MF_00169">
    <property type="entry name" value="AroQ"/>
    <property type="match status" value="1"/>
</dbReference>
<dbReference type="InterPro" id="IPR001874">
    <property type="entry name" value="DHquinase_II"/>
</dbReference>
<dbReference type="InterPro" id="IPR018509">
    <property type="entry name" value="DHquinase_II_CS"/>
</dbReference>
<dbReference type="InterPro" id="IPR036441">
    <property type="entry name" value="DHquinase_II_sf"/>
</dbReference>
<dbReference type="NCBIfam" id="TIGR01088">
    <property type="entry name" value="aroQ"/>
    <property type="match status" value="1"/>
</dbReference>
<dbReference type="NCBIfam" id="NF003805">
    <property type="entry name" value="PRK05395.1-2"/>
    <property type="match status" value="1"/>
</dbReference>
<dbReference type="NCBIfam" id="NF003806">
    <property type="entry name" value="PRK05395.1-3"/>
    <property type="match status" value="1"/>
</dbReference>
<dbReference type="NCBIfam" id="NF003807">
    <property type="entry name" value="PRK05395.1-4"/>
    <property type="match status" value="1"/>
</dbReference>
<dbReference type="PANTHER" id="PTHR21272">
    <property type="entry name" value="CATABOLIC 3-DEHYDROQUINASE"/>
    <property type="match status" value="1"/>
</dbReference>
<dbReference type="PANTHER" id="PTHR21272:SF3">
    <property type="entry name" value="CATABOLIC 3-DEHYDROQUINASE"/>
    <property type="match status" value="1"/>
</dbReference>
<dbReference type="Pfam" id="PF01220">
    <property type="entry name" value="DHquinase_II"/>
    <property type="match status" value="1"/>
</dbReference>
<dbReference type="PIRSF" id="PIRSF001399">
    <property type="entry name" value="DHquinase_II"/>
    <property type="match status" value="1"/>
</dbReference>
<dbReference type="SUPFAM" id="SSF52304">
    <property type="entry name" value="Type II 3-dehydroquinate dehydratase"/>
    <property type="match status" value="1"/>
</dbReference>
<dbReference type="PROSITE" id="PS01029">
    <property type="entry name" value="DEHYDROQUINASE_II"/>
    <property type="match status" value="1"/>
</dbReference>
<sequence>MKKVLLVNGPNLNRLGVREVNVYGKGTLATLEADMKQEAEAMGVELECFQSNHEGAIIDRIHEAEDIYEGIILNPGAFTHYSYAIRDAIASISIPVIEVHISNIHQRESFRHESVTAAVCAGQIVGFGFYGYKLALFALMEKLREA</sequence>
<comment type="function">
    <text evidence="1">Catalyzes a trans-dehydration via an enolate intermediate.</text>
</comment>
<comment type="catalytic activity">
    <reaction evidence="1">
        <text>3-dehydroquinate = 3-dehydroshikimate + H2O</text>
        <dbReference type="Rhea" id="RHEA:21096"/>
        <dbReference type="ChEBI" id="CHEBI:15377"/>
        <dbReference type="ChEBI" id="CHEBI:16630"/>
        <dbReference type="ChEBI" id="CHEBI:32364"/>
        <dbReference type="EC" id="4.2.1.10"/>
    </reaction>
</comment>
<comment type="pathway">
    <text evidence="1">Metabolic intermediate biosynthesis; chorismate biosynthesis; chorismate from D-erythrose 4-phosphate and phosphoenolpyruvate: step 3/7.</text>
</comment>
<comment type="subunit">
    <text evidence="1">Homododecamer.</text>
</comment>
<comment type="similarity">
    <text evidence="1">Belongs to the type-II 3-dehydroquinase family.</text>
</comment>
<organism>
    <name type="scientific">Bacillus anthracis (strain CDC 684 / NRRL 3495)</name>
    <dbReference type="NCBI Taxonomy" id="568206"/>
    <lineage>
        <taxon>Bacteria</taxon>
        <taxon>Bacillati</taxon>
        <taxon>Bacillota</taxon>
        <taxon>Bacilli</taxon>
        <taxon>Bacillales</taxon>
        <taxon>Bacillaceae</taxon>
        <taxon>Bacillus</taxon>
        <taxon>Bacillus cereus group</taxon>
    </lineage>
</organism>
<proteinExistence type="inferred from homology"/>
<evidence type="ECO:0000255" key="1">
    <source>
        <dbReference type="HAMAP-Rule" id="MF_00169"/>
    </source>
</evidence>
<keyword id="KW-0028">Amino-acid biosynthesis</keyword>
<keyword id="KW-0057">Aromatic amino acid biosynthesis</keyword>
<keyword id="KW-0456">Lyase</keyword>